<protein>
    <recommendedName>
        <fullName evidence="1">Aspartyl/glutamyl-tRNA(Asn/Gln) amidotransferase subunit B</fullName>
        <shortName evidence="1">Asp/Glu-ADT subunit B</shortName>
        <ecNumber evidence="1">6.3.5.-</ecNumber>
    </recommendedName>
</protein>
<feature type="chain" id="PRO_1000095236" description="Aspartyl/glutamyl-tRNA(Asn/Gln) amidotransferase subunit B">
    <location>
        <begin position="1"/>
        <end position="500"/>
    </location>
</feature>
<sequence length="500" mass="54739">MTLVDVRTPDPKRFIPGATGDWEVIVGMEVHAQVLSNSKLFSGASTEFGKPQNSNVSLVDAAMPGMLPVINEECVKQAVRTGLGLKAQINKRSLFDRKNYFYPDLPQGYQISQFKDPIVGEGKIVISLGPDRQGQFEDIEIGIERLHLEQDAGKSMHDQHATMSYVDLNRSGVALMEIVSKPDMRSSDEAKAYMTKLRSIVRYLGTCDGNMDEGSMRADVNVSVRRPGEAFGTRCEIKNVNSIRFIGQAIEYEARRQIGILEDGGTIEQETRLFDPNKGETRSMRSKEDAHDYRYFPDPDLLPLEFDDAFVTALAADLPELPDDKKERFVRELGLSVYDASVLVSEKAIADYFEAVAAGRDGKTAANWVINDLLGALNRTGKDIEQTPVSPAQLGAIIDLIKAGTISGKIAKDLFEIVLTEGGDPAEIVESRGMKQVTDTGAIEKAVDEIIAANPDQVEKVKAKPTMAAWFVGQVMKATGGKANPQAVQALVKAKLGIEE</sequence>
<gene>
    <name evidence="1" type="primary">gatB</name>
    <name type="ordered locus">RHECIAT_CH0001948</name>
</gene>
<dbReference type="EC" id="6.3.5.-" evidence="1"/>
<dbReference type="EMBL" id="CP001074">
    <property type="protein sequence ID" value="ACE90914.1"/>
    <property type="molecule type" value="Genomic_DNA"/>
</dbReference>
<dbReference type="SMR" id="B3PXX8"/>
<dbReference type="KEGG" id="rec:RHECIAT_CH0001948"/>
<dbReference type="eggNOG" id="COG0064">
    <property type="taxonomic scope" value="Bacteria"/>
</dbReference>
<dbReference type="HOGENOM" id="CLU_019240_0_0_5"/>
<dbReference type="Proteomes" id="UP000008817">
    <property type="component" value="Chromosome"/>
</dbReference>
<dbReference type="GO" id="GO:0050566">
    <property type="term" value="F:asparaginyl-tRNA synthase (glutamine-hydrolyzing) activity"/>
    <property type="evidence" value="ECO:0007669"/>
    <property type="project" value="RHEA"/>
</dbReference>
<dbReference type="GO" id="GO:0005524">
    <property type="term" value="F:ATP binding"/>
    <property type="evidence" value="ECO:0007669"/>
    <property type="project" value="UniProtKB-KW"/>
</dbReference>
<dbReference type="GO" id="GO:0050567">
    <property type="term" value="F:glutaminyl-tRNA synthase (glutamine-hydrolyzing) activity"/>
    <property type="evidence" value="ECO:0007669"/>
    <property type="project" value="UniProtKB-UniRule"/>
</dbReference>
<dbReference type="GO" id="GO:0070681">
    <property type="term" value="P:glutaminyl-tRNAGln biosynthesis via transamidation"/>
    <property type="evidence" value="ECO:0007669"/>
    <property type="project" value="TreeGrafter"/>
</dbReference>
<dbReference type="GO" id="GO:0006412">
    <property type="term" value="P:translation"/>
    <property type="evidence" value="ECO:0007669"/>
    <property type="project" value="UniProtKB-UniRule"/>
</dbReference>
<dbReference type="FunFam" id="1.10.10.410:FF:000001">
    <property type="entry name" value="Aspartyl/glutamyl-tRNA(Asn/Gln) amidotransferase subunit B"/>
    <property type="match status" value="1"/>
</dbReference>
<dbReference type="FunFam" id="1.10.150.380:FF:000001">
    <property type="entry name" value="Aspartyl/glutamyl-tRNA(Asn/Gln) amidotransferase subunit B"/>
    <property type="match status" value="1"/>
</dbReference>
<dbReference type="Gene3D" id="1.10.10.410">
    <property type="match status" value="1"/>
</dbReference>
<dbReference type="Gene3D" id="1.10.150.380">
    <property type="entry name" value="GatB domain, N-terminal subdomain"/>
    <property type="match status" value="1"/>
</dbReference>
<dbReference type="HAMAP" id="MF_00121">
    <property type="entry name" value="GatB"/>
    <property type="match status" value="1"/>
</dbReference>
<dbReference type="InterPro" id="IPR017959">
    <property type="entry name" value="Asn/Gln-tRNA_amidoTrfase_suB/E"/>
</dbReference>
<dbReference type="InterPro" id="IPR006075">
    <property type="entry name" value="Asn/Gln-tRNA_Trfase_suB/E_cat"/>
</dbReference>
<dbReference type="InterPro" id="IPR018027">
    <property type="entry name" value="Asn/Gln_amidotransferase"/>
</dbReference>
<dbReference type="InterPro" id="IPR003789">
    <property type="entry name" value="Asn/Gln_tRNA_amidoTrase-B-like"/>
</dbReference>
<dbReference type="InterPro" id="IPR004413">
    <property type="entry name" value="GatB"/>
</dbReference>
<dbReference type="InterPro" id="IPR042114">
    <property type="entry name" value="GatB_C_1"/>
</dbReference>
<dbReference type="InterPro" id="IPR023168">
    <property type="entry name" value="GatB_Yqey_C_2"/>
</dbReference>
<dbReference type="InterPro" id="IPR017958">
    <property type="entry name" value="Gln-tRNA_amidoTrfase_suB_CS"/>
</dbReference>
<dbReference type="InterPro" id="IPR014746">
    <property type="entry name" value="Gln_synth/guanido_kin_cat_dom"/>
</dbReference>
<dbReference type="NCBIfam" id="TIGR00133">
    <property type="entry name" value="gatB"/>
    <property type="match status" value="1"/>
</dbReference>
<dbReference type="NCBIfam" id="NF004012">
    <property type="entry name" value="PRK05477.1-2"/>
    <property type="match status" value="1"/>
</dbReference>
<dbReference type="NCBIfam" id="NF004014">
    <property type="entry name" value="PRK05477.1-4"/>
    <property type="match status" value="1"/>
</dbReference>
<dbReference type="NCBIfam" id="NF004015">
    <property type="entry name" value="PRK05477.1-5"/>
    <property type="match status" value="1"/>
</dbReference>
<dbReference type="PANTHER" id="PTHR11659">
    <property type="entry name" value="GLUTAMYL-TRNA GLN AMIDOTRANSFERASE SUBUNIT B MITOCHONDRIAL AND PROKARYOTIC PET112-RELATED"/>
    <property type="match status" value="1"/>
</dbReference>
<dbReference type="PANTHER" id="PTHR11659:SF0">
    <property type="entry name" value="GLUTAMYL-TRNA(GLN) AMIDOTRANSFERASE SUBUNIT B, MITOCHONDRIAL"/>
    <property type="match status" value="1"/>
</dbReference>
<dbReference type="Pfam" id="PF02934">
    <property type="entry name" value="GatB_N"/>
    <property type="match status" value="1"/>
</dbReference>
<dbReference type="Pfam" id="PF02637">
    <property type="entry name" value="GatB_Yqey"/>
    <property type="match status" value="1"/>
</dbReference>
<dbReference type="SMART" id="SM00845">
    <property type="entry name" value="GatB_Yqey"/>
    <property type="match status" value="1"/>
</dbReference>
<dbReference type="SUPFAM" id="SSF89095">
    <property type="entry name" value="GatB/YqeY motif"/>
    <property type="match status" value="1"/>
</dbReference>
<dbReference type="SUPFAM" id="SSF55931">
    <property type="entry name" value="Glutamine synthetase/guanido kinase"/>
    <property type="match status" value="1"/>
</dbReference>
<dbReference type="PROSITE" id="PS01234">
    <property type="entry name" value="GATB"/>
    <property type="match status" value="1"/>
</dbReference>
<name>GATB_RHIE6</name>
<organism>
    <name type="scientific">Rhizobium etli (strain CIAT 652)</name>
    <dbReference type="NCBI Taxonomy" id="491916"/>
    <lineage>
        <taxon>Bacteria</taxon>
        <taxon>Pseudomonadati</taxon>
        <taxon>Pseudomonadota</taxon>
        <taxon>Alphaproteobacteria</taxon>
        <taxon>Hyphomicrobiales</taxon>
        <taxon>Rhizobiaceae</taxon>
        <taxon>Rhizobium/Agrobacterium group</taxon>
        <taxon>Rhizobium</taxon>
    </lineage>
</organism>
<reference key="1">
    <citation type="journal article" date="2010" name="Appl. Environ. Microbiol.">
        <title>Conserved symbiotic plasmid DNA sequences in the multireplicon pangenomic structure of Rhizobium etli.</title>
        <authorList>
            <person name="Gonzalez V."/>
            <person name="Acosta J.L."/>
            <person name="Santamaria R.I."/>
            <person name="Bustos P."/>
            <person name="Fernandez J.L."/>
            <person name="Hernandez Gonzalez I.L."/>
            <person name="Diaz R."/>
            <person name="Flores M."/>
            <person name="Palacios R."/>
            <person name="Mora J."/>
            <person name="Davila G."/>
        </authorList>
    </citation>
    <scope>NUCLEOTIDE SEQUENCE [LARGE SCALE GENOMIC DNA]</scope>
    <source>
        <strain>CIAT 652</strain>
    </source>
</reference>
<proteinExistence type="inferred from homology"/>
<keyword id="KW-0067">ATP-binding</keyword>
<keyword id="KW-0436">Ligase</keyword>
<keyword id="KW-0547">Nucleotide-binding</keyword>
<keyword id="KW-0648">Protein biosynthesis</keyword>
<comment type="function">
    <text evidence="1">Allows the formation of correctly charged Asn-tRNA(Asn) or Gln-tRNA(Gln) through the transamidation of misacylated Asp-tRNA(Asn) or Glu-tRNA(Gln) in organisms which lack either or both of asparaginyl-tRNA or glutaminyl-tRNA synthetases. The reaction takes place in the presence of glutamine and ATP through an activated phospho-Asp-tRNA(Asn) or phospho-Glu-tRNA(Gln).</text>
</comment>
<comment type="catalytic activity">
    <reaction evidence="1">
        <text>L-glutamyl-tRNA(Gln) + L-glutamine + ATP + H2O = L-glutaminyl-tRNA(Gln) + L-glutamate + ADP + phosphate + H(+)</text>
        <dbReference type="Rhea" id="RHEA:17521"/>
        <dbReference type="Rhea" id="RHEA-COMP:9681"/>
        <dbReference type="Rhea" id="RHEA-COMP:9684"/>
        <dbReference type="ChEBI" id="CHEBI:15377"/>
        <dbReference type="ChEBI" id="CHEBI:15378"/>
        <dbReference type="ChEBI" id="CHEBI:29985"/>
        <dbReference type="ChEBI" id="CHEBI:30616"/>
        <dbReference type="ChEBI" id="CHEBI:43474"/>
        <dbReference type="ChEBI" id="CHEBI:58359"/>
        <dbReference type="ChEBI" id="CHEBI:78520"/>
        <dbReference type="ChEBI" id="CHEBI:78521"/>
        <dbReference type="ChEBI" id="CHEBI:456216"/>
    </reaction>
</comment>
<comment type="catalytic activity">
    <reaction evidence="1">
        <text>L-aspartyl-tRNA(Asn) + L-glutamine + ATP + H2O = L-asparaginyl-tRNA(Asn) + L-glutamate + ADP + phosphate + 2 H(+)</text>
        <dbReference type="Rhea" id="RHEA:14513"/>
        <dbReference type="Rhea" id="RHEA-COMP:9674"/>
        <dbReference type="Rhea" id="RHEA-COMP:9677"/>
        <dbReference type="ChEBI" id="CHEBI:15377"/>
        <dbReference type="ChEBI" id="CHEBI:15378"/>
        <dbReference type="ChEBI" id="CHEBI:29985"/>
        <dbReference type="ChEBI" id="CHEBI:30616"/>
        <dbReference type="ChEBI" id="CHEBI:43474"/>
        <dbReference type="ChEBI" id="CHEBI:58359"/>
        <dbReference type="ChEBI" id="CHEBI:78515"/>
        <dbReference type="ChEBI" id="CHEBI:78516"/>
        <dbReference type="ChEBI" id="CHEBI:456216"/>
    </reaction>
</comment>
<comment type="subunit">
    <text evidence="1">Heterotrimer of A, B and C subunits.</text>
</comment>
<comment type="similarity">
    <text evidence="1">Belongs to the GatB/GatE family. GatB subfamily.</text>
</comment>
<evidence type="ECO:0000255" key="1">
    <source>
        <dbReference type="HAMAP-Rule" id="MF_00121"/>
    </source>
</evidence>
<accession>B3PXX8</accession>